<organism>
    <name type="scientific">Geobacter sp. (strain M21)</name>
    <dbReference type="NCBI Taxonomy" id="443144"/>
    <lineage>
        <taxon>Bacteria</taxon>
        <taxon>Pseudomonadati</taxon>
        <taxon>Thermodesulfobacteriota</taxon>
        <taxon>Desulfuromonadia</taxon>
        <taxon>Geobacterales</taxon>
        <taxon>Geobacteraceae</taxon>
        <taxon>Geobacter</taxon>
    </lineage>
</organism>
<name>AROB_GEOSM</name>
<accession>C6E0S2</accession>
<feature type="chain" id="PRO_1000202910" description="3-dehydroquinate synthase">
    <location>
        <begin position="1"/>
        <end position="362"/>
    </location>
</feature>
<feature type="binding site" evidence="1">
    <location>
        <begin position="74"/>
        <end position="79"/>
    </location>
    <ligand>
        <name>NAD(+)</name>
        <dbReference type="ChEBI" id="CHEBI:57540"/>
    </ligand>
</feature>
<feature type="binding site" evidence="1">
    <location>
        <begin position="108"/>
        <end position="112"/>
    </location>
    <ligand>
        <name>NAD(+)</name>
        <dbReference type="ChEBI" id="CHEBI:57540"/>
    </ligand>
</feature>
<feature type="binding site" evidence="1">
    <location>
        <begin position="132"/>
        <end position="133"/>
    </location>
    <ligand>
        <name>NAD(+)</name>
        <dbReference type="ChEBI" id="CHEBI:57540"/>
    </ligand>
</feature>
<feature type="binding site" evidence="1">
    <location>
        <position position="145"/>
    </location>
    <ligand>
        <name>NAD(+)</name>
        <dbReference type="ChEBI" id="CHEBI:57540"/>
    </ligand>
</feature>
<feature type="binding site" evidence="1">
    <location>
        <position position="154"/>
    </location>
    <ligand>
        <name>NAD(+)</name>
        <dbReference type="ChEBI" id="CHEBI:57540"/>
    </ligand>
</feature>
<feature type="binding site" evidence="1">
    <location>
        <begin position="172"/>
        <end position="175"/>
    </location>
    <ligand>
        <name>NAD(+)</name>
        <dbReference type="ChEBI" id="CHEBI:57540"/>
    </ligand>
</feature>
<feature type="binding site" evidence="1">
    <location>
        <position position="187"/>
    </location>
    <ligand>
        <name>Zn(2+)</name>
        <dbReference type="ChEBI" id="CHEBI:29105"/>
    </ligand>
</feature>
<feature type="binding site" evidence="1">
    <location>
        <position position="250"/>
    </location>
    <ligand>
        <name>Zn(2+)</name>
        <dbReference type="ChEBI" id="CHEBI:29105"/>
    </ligand>
</feature>
<feature type="binding site" evidence="1">
    <location>
        <position position="267"/>
    </location>
    <ligand>
        <name>Zn(2+)</name>
        <dbReference type="ChEBI" id="CHEBI:29105"/>
    </ligand>
</feature>
<keyword id="KW-0028">Amino-acid biosynthesis</keyword>
<keyword id="KW-0057">Aromatic amino acid biosynthesis</keyword>
<keyword id="KW-0170">Cobalt</keyword>
<keyword id="KW-0963">Cytoplasm</keyword>
<keyword id="KW-0456">Lyase</keyword>
<keyword id="KW-0479">Metal-binding</keyword>
<keyword id="KW-0520">NAD</keyword>
<keyword id="KW-0547">Nucleotide-binding</keyword>
<keyword id="KW-0862">Zinc</keyword>
<sequence length="362" mass="38955">MIAEKIRVALDERSYDIEMGAGNLDRIGSLCREVGLSGTAAVVSNTTVAPLYYETVRLSMERAGYRVVPVTLPDGEGYKNSATLNLIYDGLVDASLDRGSFILALGGGVIGDMAGFAAASYLRGIPFVQIPTTLLSQVDSSVGGKTGINHPRGKNLIGSFYQPKAVLIDVATLDTLPEREFLSGLGEIVKYGAVLDGGFFDFLEQNAKLLLARDKEALIQAVSRSCAIKAKVVAEDEREGGVRAVLNFGHTLGHAVETLTGYTRYLHGEAVAIGMVQAARISQHYGFCSQADRERIEALIVALGLPIELPIFPAQQYREALSHDKKVRDKGLLFICNQGIGAYRMERLTDLGALLEICGIGE</sequence>
<reference key="1">
    <citation type="submission" date="2009-07" db="EMBL/GenBank/DDBJ databases">
        <title>Complete sequence of Geobacter sp. M21.</title>
        <authorList>
            <consortium name="US DOE Joint Genome Institute"/>
            <person name="Lucas S."/>
            <person name="Copeland A."/>
            <person name="Lapidus A."/>
            <person name="Glavina del Rio T."/>
            <person name="Dalin E."/>
            <person name="Tice H."/>
            <person name="Bruce D."/>
            <person name="Goodwin L."/>
            <person name="Pitluck S."/>
            <person name="Saunders E."/>
            <person name="Brettin T."/>
            <person name="Detter J.C."/>
            <person name="Han C."/>
            <person name="Larimer F."/>
            <person name="Land M."/>
            <person name="Hauser L."/>
            <person name="Kyrpides N."/>
            <person name="Ovchinnikova G."/>
            <person name="Lovley D."/>
        </authorList>
    </citation>
    <scope>NUCLEOTIDE SEQUENCE [LARGE SCALE GENOMIC DNA]</scope>
    <source>
        <strain>M21</strain>
    </source>
</reference>
<dbReference type="EC" id="4.2.3.4" evidence="1"/>
<dbReference type="EMBL" id="CP001661">
    <property type="protein sequence ID" value="ACT18696.1"/>
    <property type="molecule type" value="Genomic_DNA"/>
</dbReference>
<dbReference type="SMR" id="C6E0S2"/>
<dbReference type="STRING" id="443144.GM21_2660"/>
<dbReference type="KEGG" id="gem:GM21_2660"/>
<dbReference type="eggNOG" id="COG0337">
    <property type="taxonomic scope" value="Bacteria"/>
</dbReference>
<dbReference type="HOGENOM" id="CLU_001201_0_2_7"/>
<dbReference type="OrthoDB" id="9806583at2"/>
<dbReference type="UniPathway" id="UPA00053">
    <property type="reaction ID" value="UER00085"/>
</dbReference>
<dbReference type="GO" id="GO:0005737">
    <property type="term" value="C:cytoplasm"/>
    <property type="evidence" value="ECO:0007669"/>
    <property type="project" value="UniProtKB-SubCell"/>
</dbReference>
<dbReference type="GO" id="GO:0003856">
    <property type="term" value="F:3-dehydroquinate synthase activity"/>
    <property type="evidence" value="ECO:0007669"/>
    <property type="project" value="UniProtKB-UniRule"/>
</dbReference>
<dbReference type="GO" id="GO:0046872">
    <property type="term" value="F:metal ion binding"/>
    <property type="evidence" value="ECO:0007669"/>
    <property type="project" value="UniProtKB-KW"/>
</dbReference>
<dbReference type="GO" id="GO:0000166">
    <property type="term" value="F:nucleotide binding"/>
    <property type="evidence" value="ECO:0007669"/>
    <property type="project" value="UniProtKB-KW"/>
</dbReference>
<dbReference type="GO" id="GO:0008652">
    <property type="term" value="P:amino acid biosynthetic process"/>
    <property type="evidence" value="ECO:0007669"/>
    <property type="project" value="UniProtKB-KW"/>
</dbReference>
<dbReference type="GO" id="GO:0009073">
    <property type="term" value="P:aromatic amino acid family biosynthetic process"/>
    <property type="evidence" value="ECO:0007669"/>
    <property type="project" value="UniProtKB-KW"/>
</dbReference>
<dbReference type="GO" id="GO:0009423">
    <property type="term" value="P:chorismate biosynthetic process"/>
    <property type="evidence" value="ECO:0007669"/>
    <property type="project" value="UniProtKB-UniRule"/>
</dbReference>
<dbReference type="CDD" id="cd08195">
    <property type="entry name" value="DHQS"/>
    <property type="match status" value="1"/>
</dbReference>
<dbReference type="FunFam" id="3.40.50.1970:FF:000001">
    <property type="entry name" value="3-dehydroquinate synthase"/>
    <property type="match status" value="1"/>
</dbReference>
<dbReference type="Gene3D" id="3.40.50.1970">
    <property type="match status" value="1"/>
</dbReference>
<dbReference type="Gene3D" id="1.20.1090.10">
    <property type="entry name" value="Dehydroquinate synthase-like - alpha domain"/>
    <property type="match status" value="1"/>
</dbReference>
<dbReference type="HAMAP" id="MF_00110">
    <property type="entry name" value="DHQ_synthase"/>
    <property type="match status" value="1"/>
</dbReference>
<dbReference type="InterPro" id="IPR050071">
    <property type="entry name" value="Dehydroquinate_synthase"/>
</dbReference>
<dbReference type="InterPro" id="IPR016037">
    <property type="entry name" value="DHQ_synth_AroB"/>
</dbReference>
<dbReference type="InterPro" id="IPR030963">
    <property type="entry name" value="DHQ_synth_fam"/>
</dbReference>
<dbReference type="InterPro" id="IPR030960">
    <property type="entry name" value="DHQS/DOIS_N"/>
</dbReference>
<dbReference type="InterPro" id="IPR056179">
    <property type="entry name" value="DHQS_C"/>
</dbReference>
<dbReference type="NCBIfam" id="TIGR01357">
    <property type="entry name" value="aroB"/>
    <property type="match status" value="1"/>
</dbReference>
<dbReference type="PANTHER" id="PTHR43622">
    <property type="entry name" value="3-DEHYDROQUINATE SYNTHASE"/>
    <property type="match status" value="1"/>
</dbReference>
<dbReference type="PANTHER" id="PTHR43622:SF7">
    <property type="entry name" value="3-DEHYDROQUINATE SYNTHASE, CHLOROPLASTIC"/>
    <property type="match status" value="1"/>
</dbReference>
<dbReference type="Pfam" id="PF01761">
    <property type="entry name" value="DHQ_synthase"/>
    <property type="match status" value="1"/>
</dbReference>
<dbReference type="Pfam" id="PF24621">
    <property type="entry name" value="DHQS_C"/>
    <property type="match status" value="1"/>
</dbReference>
<dbReference type="PIRSF" id="PIRSF001455">
    <property type="entry name" value="DHQ_synth"/>
    <property type="match status" value="1"/>
</dbReference>
<dbReference type="SUPFAM" id="SSF56796">
    <property type="entry name" value="Dehydroquinate synthase-like"/>
    <property type="match status" value="1"/>
</dbReference>
<protein>
    <recommendedName>
        <fullName evidence="1">3-dehydroquinate synthase</fullName>
        <shortName evidence="1">DHQS</shortName>
        <ecNumber evidence="1">4.2.3.4</ecNumber>
    </recommendedName>
</protein>
<comment type="function">
    <text evidence="1">Catalyzes the conversion of 3-deoxy-D-arabino-heptulosonate 7-phosphate (DAHP) to dehydroquinate (DHQ).</text>
</comment>
<comment type="catalytic activity">
    <reaction evidence="1">
        <text>7-phospho-2-dehydro-3-deoxy-D-arabino-heptonate = 3-dehydroquinate + phosphate</text>
        <dbReference type="Rhea" id="RHEA:21968"/>
        <dbReference type="ChEBI" id="CHEBI:32364"/>
        <dbReference type="ChEBI" id="CHEBI:43474"/>
        <dbReference type="ChEBI" id="CHEBI:58394"/>
        <dbReference type="EC" id="4.2.3.4"/>
    </reaction>
</comment>
<comment type="cofactor">
    <cofactor evidence="1">
        <name>Co(2+)</name>
        <dbReference type="ChEBI" id="CHEBI:48828"/>
    </cofactor>
    <cofactor evidence="1">
        <name>Zn(2+)</name>
        <dbReference type="ChEBI" id="CHEBI:29105"/>
    </cofactor>
    <text evidence="1">Binds 1 divalent metal cation per subunit. Can use either Co(2+) or Zn(2+).</text>
</comment>
<comment type="cofactor">
    <cofactor evidence="1">
        <name>NAD(+)</name>
        <dbReference type="ChEBI" id="CHEBI:57540"/>
    </cofactor>
</comment>
<comment type="pathway">
    <text evidence="1">Metabolic intermediate biosynthesis; chorismate biosynthesis; chorismate from D-erythrose 4-phosphate and phosphoenolpyruvate: step 2/7.</text>
</comment>
<comment type="subcellular location">
    <subcellularLocation>
        <location evidence="1">Cytoplasm</location>
    </subcellularLocation>
</comment>
<comment type="similarity">
    <text evidence="1">Belongs to the sugar phosphate cyclases superfamily. Dehydroquinate synthase family.</text>
</comment>
<proteinExistence type="inferred from homology"/>
<gene>
    <name evidence="1" type="primary">aroB</name>
    <name type="ordered locus">GM21_2660</name>
</gene>
<evidence type="ECO:0000255" key="1">
    <source>
        <dbReference type="HAMAP-Rule" id="MF_00110"/>
    </source>
</evidence>